<organism>
    <name type="scientific">Psychrobacter arcticus (strain DSM 17307 / VKM B-2377 / 273-4)</name>
    <dbReference type="NCBI Taxonomy" id="259536"/>
    <lineage>
        <taxon>Bacteria</taxon>
        <taxon>Pseudomonadati</taxon>
        <taxon>Pseudomonadota</taxon>
        <taxon>Gammaproteobacteria</taxon>
        <taxon>Moraxellales</taxon>
        <taxon>Moraxellaceae</taxon>
        <taxon>Psychrobacter</taxon>
    </lineage>
</organism>
<reference key="1">
    <citation type="journal article" date="2010" name="Appl. Environ. Microbiol.">
        <title>The genome sequence of Psychrobacter arcticus 273-4, a psychroactive Siberian permafrost bacterium, reveals mechanisms for adaptation to low-temperature growth.</title>
        <authorList>
            <person name="Ayala-del-Rio H.L."/>
            <person name="Chain P.S."/>
            <person name="Grzymski J.J."/>
            <person name="Ponder M.A."/>
            <person name="Ivanova N."/>
            <person name="Bergholz P.W."/>
            <person name="Di Bartolo G."/>
            <person name="Hauser L."/>
            <person name="Land M."/>
            <person name="Bakermans C."/>
            <person name="Rodrigues D."/>
            <person name="Klappenbach J."/>
            <person name="Zarka D."/>
            <person name="Larimer F."/>
            <person name="Richardson P."/>
            <person name="Murray A."/>
            <person name="Thomashow M."/>
            <person name="Tiedje J.M."/>
        </authorList>
    </citation>
    <scope>NUCLEOTIDE SEQUENCE [LARGE SCALE GENOMIC DNA]</scope>
    <source>
        <strain>DSM 17307 / VKM B-2377 / 273-4</strain>
    </source>
</reference>
<feature type="chain" id="PRO_0000237916" description="Shikimate kinase">
    <location>
        <begin position="1"/>
        <end position="186"/>
    </location>
</feature>
<feature type="binding site" evidence="1">
    <location>
        <begin position="15"/>
        <end position="20"/>
    </location>
    <ligand>
        <name>ATP</name>
        <dbReference type="ChEBI" id="CHEBI:30616"/>
    </ligand>
</feature>
<feature type="binding site" evidence="1">
    <location>
        <position position="19"/>
    </location>
    <ligand>
        <name>Mg(2+)</name>
        <dbReference type="ChEBI" id="CHEBI:18420"/>
    </ligand>
</feature>
<feature type="binding site" evidence="1">
    <location>
        <position position="37"/>
    </location>
    <ligand>
        <name>substrate</name>
    </ligand>
</feature>
<feature type="binding site" evidence="1">
    <location>
        <position position="61"/>
    </location>
    <ligand>
        <name>substrate</name>
    </ligand>
</feature>
<feature type="binding site" evidence="1">
    <location>
        <position position="83"/>
    </location>
    <ligand>
        <name>substrate</name>
    </ligand>
</feature>
<feature type="binding site" evidence="1">
    <location>
        <position position="121"/>
    </location>
    <ligand>
        <name>ATP</name>
        <dbReference type="ChEBI" id="CHEBI:30616"/>
    </ligand>
</feature>
<feature type="binding site" evidence="1">
    <location>
        <position position="140"/>
    </location>
    <ligand>
        <name>substrate</name>
    </ligand>
</feature>
<name>AROK_PSYA2</name>
<proteinExistence type="inferred from homology"/>
<accession>Q4FQI2</accession>
<gene>
    <name evidence="1" type="primary">aroK</name>
    <name type="ordered locus">Psyc_1878</name>
</gene>
<evidence type="ECO:0000255" key="1">
    <source>
        <dbReference type="HAMAP-Rule" id="MF_00109"/>
    </source>
</evidence>
<keyword id="KW-0028">Amino-acid biosynthesis</keyword>
<keyword id="KW-0057">Aromatic amino acid biosynthesis</keyword>
<keyword id="KW-0067">ATP-binding</keyword>
<keyword id="KW-0963">Cytoplasm</keyword>
<keyword id="KW-0418">Kinase</keyword>
<keyword id="KW-0460">Magnesium</keyword>
<keyword id="KW-0479">Metal-binding</keyword>
<keyword id="KW-0547">Nucleotide-binding</keyword>
<keyword id="KW-1185">Reference proteome</keyword>
<keyword id="KW-0808">Transferase</keyword>
<dbReference type="EC" id="2.7.1.71" evidence="1"/>
<dbReference type="EMBL" id="CP000082">
    <property type="protein sequence ID" value="AAZ19726.1"/>
    <property type="molecule type" value="Genomic_DNA"/>
</dbReference>
<dbReference type="RefSeq" id="WP_011281136.1">
    <property type="nucleotide sequence ID" value="NC_007204.1"/>
</dbReference>
<dbReference type="SMR" id="Q4FQI2"/>
<dbReference type="STRING" id="259536.Psyc_1878"/>
<dbReference type="KEGG" id="par:Psyc_1878"/>
<dbReference type="eggNOG" id="COG0703">
    <property type="taxonomic scope" value="Bacteria"/>
</dbReference>
<dbReference type="HOGENOM" id="CLU_057607_2_2_6"/>
<dbReference type="OrthoDB" id="9800332at2"/>
<dbReference type="UniPathway" id="UPA00053">
    <property type="reaction ID" value="UER00088"/>
</dbReference>
<dbReference type="Proteomes" id="UP000000546">
    <property type="component" value="Chromosome"/>
</dbReference>
<dbReference type="GO" id="GO:0005829">
    <property type="term" value="C:cytosol"/>
    <property type="evidence" value="ECO:0007669"/>
    <property type="project" value="TreeGrafter"/>
</dbReference>
<dbReference type="GO" id="GO:0005524">
    <property type="term" value="F:ATP binding"/>
    <property type="evidence" value="ECO:0007669"/>
    <property type="project" value="UniProtKB-UniRule"/>
</dbReference>
<dbReference type="GO" id="GO:0000287">
    <property type="term" value="F:magnesium ion binding"/>
    <property type="evidence" value="ECO:0007669"/>
    <property type="project" value="UniProtKB-UniRule"/>
</dbReference>
<dbReference type="GO" id="GO:0004765">
    <property type="term" value="F:shikimate kinase activity"/>
    <property type="evidence" value="ECO:0007669"/>
    <property type="project" value="UniProtKB-UniRule"/>
</dbReference>
<dbReference type="GO" id="GO:0008652">
    <property type="term" value="P:amino acid biosynthetic process"/>
    <property type="evidence" value="ECO:0007669"/>
    <property type="project" value="UniProtKB-KW"/>
</dbReference>
<dbReference type="GO" id="GO:0009073">
    <property type="term" value="P:aromatic amino acid family biosynthetic process"/>
    <property type="evidence" value="ECO:0007669"/>
    <property type="project" value="UniProtKB-KW"/>
</dbReference>
<dbReference type="GO" id="GO:0009423">
    <property type="term" value="P:chorismate biosynthetic process"/>
    <property type="evidence" value="ECO:0007669"/>
    <property type="project" value="UniProtKB-UniRule"/>
</dbReference>
<dbReference type="CDD" id="cd00464">
    <property type="entry name" value="SK"/>
    <property type="match status" value="1"/>
</dbReference>
<dbReference type="Gene3D" id="3.40.50.300">
    <property type="entry name" value="P-loop containing nucleotide triphosphate hydrolases"/>
    <property type="match status" value="1"/>
</dbReference>
<dbReference type="HAMAP" id="MF_00109">
    <property type="entry name" value="Shikimate_kinase"/>
    <property type="match status" value="1"/>
</dbReference>
<dbReference type="InterPro" id="IPR027417">
    <property type="entry name" value="P-loop_NTPase"/>
</dbReference>
<dbReference type="InterPro" id="IPR031322">
    <property type="entry name" value="Shikimate/glucono_kinase"/>
</dbReference>
<dbReference type="InterPro" id="IPR000623">
    <property type="entry name" value="Shikimate_kinase/TSH1"/>
</dbReference>
<dbReference type="InterPro" id="IPR023000">
    <property type="entry name" value="Shikimate_kinase_CS"/>
</dbReference>
<dbReference type="NCBIfam" id="NF003456">
    <property type="entry name" value="PRK05057.1"/>
    <property type="match status" value="1"/>
</dbReference>
<dbReference type="PANTHER" id="PTHR21087">
    <property type="entry name" value="SHIKIMATE KINASE"/>
    <property type="match status" value="1"/>
</dbReference>
<dbReference type="PANTHER" id="PTHR21087:SF16">
    <property type="entry name" value="SHIKIMATE KINASE 1, CHLOROPLASTIC"/>
    <property type="match status" value="1"/>
</dbReference>
<dbReference type="Pfam" id="PF01202">
    <property type="entry name" value="SKI"/>
    <property type="match status" value="1"/>
</dbReference>
<dbReference type="PRINTS" id="PR01100">
    <property type="entry name" value="SHIKIMTKNASE"/>
</dbReference>
<dbReference type="SUPFAM" id="SSF52540">
    <property type="entry name" value="P-loop containing nucleoside triphosphate hydrolases"/>
    <property type="match status" value="1"/>
</dbReference>
<dbReference type="PROSITE" id="PS01128">
    <property type="entry name" value="SHIKIMATE_KINASE"/>
    <property type="match status" value="1"/>
</dbReference>
<protein>
    <recommendedName>
        <fullName evidence="1">Shikimate kinase</fullName>
        <shortName evidence="1">SK</shortName>
        <ecNumber evidence="1">2.7.1.71</ecNumber>
    </recommendedName>
</protein>
<sequence length="186" mass="20740">MVEELPSVFLVGPMGAGKTTIGRLLAKQLGRTFVDSDWYVESQTGADIAWIFDKEGEAGFRERETRAIDELTQQPQIVLATGGGAVMAAENREFLKQRGIVIYLNAPVDVQMARTAKDKSRPLLQQPNPRKILQGLYSARDPLYRQVAHIIMPTGHTYPRHMVNQLLQQLNSFCASTSVVSEPEKD</sequence>
<comment type="function">
    <text evidence="1">Catalyzes the specific phosphorylation of the 3-hydroxyl group of shikimic acid using ATP as a cosubstrate.</text>
</comment>
<comment type="catalytic activity">
    <reaction evidence="1">
        <text>shikimate + ATP = 3-phosphoshikimate + ADP + H(+)</text>
        <dbReference type="Rhea" id="RHEA:13121"/>
        <dbReference type="ChEBI" id="CHEBI:15378"/>
        <dbReference type="ChEBI" id="CHEBI:30616"/>
        <dbReference type="ChEBI" id="CHEBI:36208"/>
        <dbReference type="ChEBI" id="CHEBI:145989"/>
        <dbReference type="ChEBI" id="CHEBI:456216"/>
        <dbReference type="EC" id="2.7.1.71"/>
    </reaction>
</comment>
<comment type="cofactor">
    <cofactor evidence="1">
        <name>Mg(2+)</name>
        <dbReference type="ChEBI" id="CHEBI:18420"/>
    </cofactor>
    <text evidence="1">Binds 1 Mg(2+) ion per subunit.</text>
</comment>
<comment type="pathway">
    <text evidence="1">Metabolic intermediate biosynthesis; chorismate biosynthesis; chorismate from D-erythrose 4-phosphate and phosphoenolpyruvate: step 5/7.</text>
</comment>
<comment type="subunit">
    <text evidence="1">Monomer.</text>
</comment>
<comment type="subcellular location">
    <subcellularLocation>
        <location evidence="1">Cytoplasm</location>
    </subcellularLocation>
</comment>
<comment type="similarity">
    <text evidence="1">Belongs to the shikimate kinase family.</text>
</comment>